<accession>B2K9P9</accession>
<proteinExistence type="inferred from homology"/>
<comment type="catalytic activity">
    <reaction evidence="1">
        <text>tRNA(His) + L-histidine + ATP = L-histidyl-tRNA(His) + AMP + diphosphate + H(+)</text>
        <dbReference type="Rhea" id="RHEA:17313"/>
        <dbReference type="Rhea" id="RHEA-COMP:9665"/>
        <dbReference type="Rhea" id="RHEA-COMP:9689"/>
        <dbReference type="ChEBI" id="CHEBI:15378"/>
        <dbReference type="ChEBI" id="CHEBI:30616"/>
        <dbReference type="ChEBI" id="CHEBI:33019"/>
        <dbReference type="ChEBI" id="CHEBI:57595"/>
        <dbReference type="ChEBI" id="CHEBI:78442"/>
        <dbReference type="ChEBI" id="CHEBI:78527"/>
        <dbReference type="ChEBI" id="CHEBI:456215"/>
        <dbReference type="EC" id="6.1.1.21"/>
    </reaction>
</comment>
<comment type="subunit">
    <text evidence="1">Homodimer.</text>
</comment>
<comment type="subcellular location">
    <subcellularLocation>
        <location evidence="1">Cytoplasm</location>
    </subcellularLocation>
</comment>
<comment type="similarity">
    <text evidence="1">Belongs to the class-II aminoacyl-tRNA synthetase family.</text>
</comment>
<evidence type="ECO:0000255" key="1">
    <source>
        <dbReference type="HAMAP-Rule" id="MF_00127"/>
    </source>
</evidence>
<keyword id="KW-0030">Aminoacyl-tRNA synthetase</keyword>
<keyword id="KW-0067">ATP-binding</keyword>
<keyword id="KW-0963">Cytoplasm</keyword>
<keyword id="KW-0436">Ligase</keyword>
<keyword id="KW-0547">Nucleotide-binding</keyword>
<keyword id="KW-0648">Protein biosynthesis</keyword>
<protein>
    <recommendedName>
        <fullName evidence="1">Histidine--tRNA ligase</fullName>
        <ecNumber evidence="1">6.1.1.21</ecNumber>
    </recommendedName>
    <alternativeName>
        <fullName evidence="1">Histidyl-tRNA synthetase</fullName>
        <shortName evidence="1">HisRS</shortName>
    </alternativeName>
</protein>
<reference key="1">
    <citation type="submission" date="2008-04" db="EMBL/GenBank/DDBJ databases">
        <title>Complete sequence of Yersinia pseudotuberculosis PB1/+.</title>
        <authorList>
            <person name="Copeland A."/>
            <person name="Lucas S."/>
            <person name="Lapidus A."/>
            <person name="Glavina del Rio T."/>
            <person name="Dalin E."/>
            <person name="Tice H."/>
            <person name="Bruce D."/>
            <person name="Goodwin L."/>
            <person name="Pitluck S."/>
            <person name="Munk A.C."/>
            <person name="Brettin T."/>
            <person name="Detter J.C."/>
            <person name="Han C."/>
            <person name="Tapia R."/>
            <person name="Schmutz J."/>
            <person name="Larimer F."/>
            <person name="Land M."/>
            <person name="Hauser L."/>
            <person name="Challacombe J.F."/>
            <person name="Green L."/>
            <person name="Lindler L.E."/>
            <person name="Nikolich M.P."/>
            <person name="Richardson P."/>
        </authorList>
    </citation>
    <scope>NUCLEOTIDE SEQUENCE [LARGE SCALE GENOMIC DNA]</scope>
    <source>
        <strain>PB1/+</strain>
    </source>
</reference>
<sequence length="424" mass="47262">MAKNIQAIRGMNDYLPADTAIWQRIESILKQVLSGYGYSEIRMPIVEQTPLFKRAIGEVTDVVEKEMYTFDDRNGESLTLRPEGTAGCVRAGIEHGLLYNQEQRLWYIGPMFRYERPQKGRYRQFHQLGAEVFGLPGPDIDAELILLTARWWRALGIFEHVKLELNSIGSLAARADYREALVAFLEQHVEVLDEDCKRRMYSNPLRVLDSKNPDVQQLLDDAPKLSDYLDEESKQHFAGLCELLDKASIPYTVNERLVRGLDYYNRTVFEWVTHSLGAQGTVCAGGRYDGLVEQLGGRATPAVGFAMGLERLVLLVQAVNADFQVPATVDAYVISSGEGAQSAAMLLAESLRDALPTLKIMTNYGGGNVKKQFTRADKWGARVALMLGESEVAAQQVVVKDLRNGEQETLAQADVAARLALMLG</sequence>
<gene>
    <name evidence="1" type="primary">hisS</name>
    <name type="ordered locus">YPTS_2949</name>
</gene>
<feature type="chain" id="PRO_1000095615" description="Histidine--tRNA ligase">
    <location>
        <begin position="1"/>
        <end position="424"/>
    </location>
</feature>
<organism>
    <name type="scientific">Yersinia pseudotuberculosis serotype IB (strain PB1/+)</name>
    <dbReference type="NCBI Taxonomy" id="502801"/>
    <lineage>
        <taxon>Bacteria</taxon>
        <taxon>Pseudomonadati</taxon>
        <taxon>Pseudomonadota</taxon>
        <taxon>Gammaproteobacteria</taxon>
        <taxon>Enterobacterales</taxon>
        <taxon>Yersiniaceae</taxon>
        <taxon>Yersinia</taxon>
    </lineage>
</organism>
<dbReference type="EC" id="6.1.1.21" evidence="1"/>
<dbReference type="EMBL" id="CP001048">
    <property type="protein sequence ID" value="ACC89906.1"/>
    <property type="molecule type" value="Genomic_DNA"/>
</dbReference>
<dbReference type="RefSeq" id="WP_002209816.1">
    <property type="nucleotide sequence ID" value="NZ_CP009780.1"/>
</dbReference>
<dbReference type="SMR" id="B2K9P9"/>
<dbReference type="GeneID" id="57975836"/>
<dbReference type="KEGG" id="ypb:YPTS_2949"/>
<dbReference type="PATRIC" id="fig|502801.10.peg.2379"/>
<dbReference type="GO" id="GO:0005737">
    <property type="term" value="C:cytoplasm"/>
    <property type="evidence" value="ECO:0007669"/>
    <property type="project" value="UniProtKB-SubCell"/>
</dbReference>
<dbReference type="GO" id="GO:0005524">
    <property type="term" value="F:ATP binding"/>
    <property type="evidence" value="ECO:0007669"/>
    <property type="project" value="UniProtKB-UniRule"/>
</dbReference>
<dbReference type="GO" id="GO:0004821">
    <property type="term" value="F:histidine-tRNA ligase activity"/>
    <property type="evidence" value="ECO:0007669"/>
    <property type="project" value="UniProtKB-UniRule"/>
</dbReference>
<dbReference type="GO" id="GO:0006427">
    <property type="term" value="P:histidyl-tRNA aminoacylation"/>
    <property type="evidence" value="ECO:0007669"/>
    <property type="project" value="UniProtKB-UniRule"/>
</dbReference>
<dbReference type="CDD" id="cd00773">
    <property type="entry name" value="HisRS-like_core"/>
    <property type="match status" value="1"/>
</dbReference>
<dbReference type="CDD" id="cd00859">
    <property type="entry name" value="HisRS_anticodon"/>
    <property type="match status" value="1"/>
</dbReference>
<dbReference type="FunFam" id="3.30.930.10:FF:000005">
    <property type="entry name" value="Histidine--tRNA ligase"/>
    <property type="match status" value="1"/>
</dbReference>
<dbReference type="FunFam" id="3.40.50.800:FF:000007">
    <property type="entry name" value="Histidine--tRNA ligase"/>
    <property type="match status" value="1"/>
</dbReference>
<dbReference type="Gene3D" id="3.40.50.800">
    <property type="entry name" value="Anticodon-binding domain"/>
    <property type="match status" value="1"/>
</dbReference>
<dbReference type="Gene3D" id="3.30.930.10">
    <property type="entry name" value="Bira Bifunctional Protein, Domain 2"/>
    <property type="match status" value="1"/>
</dbReference>
<dbReference type="HAMAP" id="MF_00127">
    <property type="entry name" value="His_tRNA_synth"/>
    <property type="match status" value="1"/>
</dbReference>
<dbReference type="InterPro" id="IPR006195">
    <property type="entry name" value="aa-tRNA-synth_II"/>
</dbReference>
<dbReference type="InterPro" id="IPR045864">
    <property type="entry name" value="aa-tRNA-synth_II/BPL/LPL"/>
</dbReference>
<dbReference type="InterPro" id="IPR004154">
    <property type="entry name" value="Anticodon-bd"/>
</dbReference>
<dbReference type="InterPro" id="IPR036621">
    <property type="entry name" value="Anticodon-bd_dom_sf"/>
</dbReference>
<dbReference type="InterPro" id="IPR015807">
    <property type="entry name" value="His-tRNA-ligase"/>
</dbReference>
<dbReference type="InterPro" id="IPR041715">
    <property type="entry name" value="HisRS-like_core"/>
</dbReference>
<dbReference type="InterPro" id="IPR004516">
    <property type="entry name" value="HisRS/HisZ"/>
</dbReference>
<dbReference type="InterPro" id="IPR033656">
    <property type="entry name" value="HisRS_anticodon"/>
</dbReference>
<dbReference type="NCBIfam" id="TIGR00442">
    <property type="entry name" value="hisS"/>
    <property type="match status" value="1"/>
</dbReference>
<dbReference type="PANTHER" id="PTHR43707:SF1">
    <property type="entry name" value="HISTIDINE--TRNA LIGASE, MITOCHONDRIAL-RELATED"/>
    <property type="match status" value="1"/>
</dbReference>
<dbReference type="PANTHER" id="PTHR43707">
    <property type="entry name" value="HISTIDYL-TRNA SYNTHETASE"/>
    <property type="match status" value="1"/>
</dbReference>
<dbReference type="Pfam" id="PF03129">
    <property type="entry name" value="HGTP_anticodon"/>
    <property type="match status" value="1"/>
</dbReference>
<dbReference type="Pfam" id="PF13393">
    <property type="entry name" value="tRNA-synt_His"/>
    <property type="match status" value="1"/>
</dbReference>
<dbReference type="PIRSF" id="PIRSF001549">
    <property type="entry name" value="His-tRNA_synth"/>
    <property type="match status" value="1"/>
</dbReference>
<dbReference type="SUPFAM" id="SSF52954">
    <property type="entry name" value="Class II aaRS ABD-related"/>
    <property type="match status" value="1"/>
</dbReference>
<dbReference type="SUPFAM" id="SSF55681">
    <property type="entry name" value="Class II aaRS and biotin synthetases"/>
    <property type="match status" value="1"/>
</dbReference>
<dbReference type="PROSITE" id="PS50862">
    <property type="entry name" value="AA_TRNA_LIGASE_II"/>
    <property type="match status" value="1"/>
</dbReference>
<name>SYH_YERPB</name>